<organism>
    <name type="scientific">Staphylococcus aureus (strain N315)</name>
    <dbReference type="NCBI Taxonomy" id="158879"/>
    <lineage>
        <taxon>Bacteria</taxon>
        <taxon>Bacillati</taxon>
        <taxon>Bacillota</taxon>
        <taxon>Bacilli</taxon>
        <taxon>Bacillales</taxon>
        <taxon>Staphylococcaceae</taxon>
        <taxon>Staphylococcus</taxon>
    </lineage>
</organism>
<accession>P67765</accession>
<accession>Q99W74</accession>
<proteinExistence type="evidence at protein level"/>
<keyword id="KW-0012">Acyltransferase</keyword>
<keyword id="KW-0028">Amino-acid biosynthesis</keyword>
<keyword id="KW-0198">Cysteine biosynthesis</keyword>
<keyword id="KW-0963">Cytoplasm</keyword>
<keyword id="KW-0677">Repeat</keyword>
<keyword id="KW-0808">Transferase</keyword>
<sequence>MLKRMRDDIKMVFEQDPAARSTLEVITTYAGLHAVWSHLIAHKLYNQKKYVAARAISQISRFFTGIEIHPGAKIGKRLFIDHGMGVVIGETCTIGDNVTIYQGVTLGGTGKERGKRHPDIGDNVLIAAGAKVLGNIKINSNVNIGANSVVLQSVPSYSTVVGIPGHIVKQDGVRVGKTFDHRHLPDPIYEQIKHLERQLEKTRNGEIQDDYII</sequence>
<feature type="chain" id="PRO_0000068679" description="Serine acetyltransferase">
    <location>
        <begin position="1"/>
        <end position="213"/>
    </location>
</feature>
<dbReference type="EC" id="2.3.1.30"/>
<dbReference type="EMBL" id="BA000018">
    <property type="protein sequence ID" value="BAB41717.1"/>
    <property type="molecule type" value="Genomic_DNA"/>
</dbReference>
<dbReference type="PIR" id="B89820">
    <property type="entry name" value="B89820"/>
</dbReference>
<dbReference type="SMR" id="P67765"/>
<dbReference type="EnsemblBacteria" id="BAB41717">
    <property type="protein sequence ID" value="BAB41717"/>
    <property type="gene ID" value="BAB41717"/>
</dbReference>
<dbReference type="KEGG" id="sau:SA0487"/>
<dbReference type="HOGENOM" id="CLU_051638_10_0_9"/>
<dbReference type="UniPathway" id="UPA00136">
    <property type="reaction ID" value="UER00199"/>
</dbReference>
<dbReference type="GO" id="GO:0005737">
    <property type="term" value="C:cytoplasm"/>
    <property type="evidence" value="ECO:0007669"/>
    <property type="project" value="UniProtKB-SubCell"/>
</dbReference>
<dbReference type="GO" id="GO:0009001">
    <property type="term" value="F:serine O-acetyltransferase activity"/>
    <property type="evidence" value="ECO:0007669"/>
    <property type="project" value="UniProtKB-EC"/>
</dbReference>
<dbReference type="GO" id="GO:0006535">
    <property type="term" value="P:cysteine biosynthetic process from serine"/>
    <property type="evidence" value="ECO:0007669"/>
    <property type="project" value="InterPro"/>
</dbReference>
<dbReference type="CDD" id="cd03354">
    <property type="entry name" value="LbH_SAT"/>
    <property type="match status" value="1"/>
</dbReference>
<dbReference type="FunFam" id="1.10.3130.10:FF:000002">
    <property type="entry name" value="Serine acetyltransferase"/>
    <property type="match status" value="1"/>
</dbReference>
<dbReference type="FunFam" id="2.160.10.10:FF:000007">
    <property type="entry name" value="Serine acetyltransferase"/>
    <property type="match status" value="1"/>
</dbReference>
<dbReference type="Gene3D" id="2.160.10.10">
    <property type="entry name" value="Hexapeptide repeat proteins"/>
    <property type="match status" value="1"/>
</dbReference>
<dbReference type="Gene3D" id="1.10.3130.10">
    <property type="entry name" value="serine acetyltransferase, domain 1"/>
    <property type="match status" value="1"/>
</dbReference>
<dbReference type="InterPro" id="IPR001451">
    <property type="entry name" value="Hexapep"/>
</dbReference>
<dbReference type="InterPro" id="IPR045304">
    <property type="entry name" value="LbH_SAT"/>
</dbReference>
<dbReference type="InterPro" id="IPR042122">
    <property type="entry name" value="Ser_AcTrfase_N_sf"/>
</dbReference>
<dbReference type="InterPro" id="IPR005881">
    <property type="entry name" value="Ser_O-AcTrfase"/>
</dbReference>
<dbReference type="InterPro" id="IPR053376">
    <property type="entry name" value="Serine_acetyltransferase"/>
</dbReference>
<dbReference type="InterPro" id="IPR011004">
    <property type="entry name" value="Trimer_LpxA-like_sf"/>
</dbReference>
<dbReference type="NCBIfam" id="TIGR01172">
    <property type="entry name" value="cysE"/>
    <property type="match status" value="1"/>
</dbReference>
<dbReference type="NCBIfam" id="NF041874">
    <property type="entry name" value="EPS_EpsC"/>
    <property type="match status" value="1"/>
</dbReference>
<dbReference type="PANTHER" id="PTHR42811">
    <property type="entry name" value="SERINE ACETYLTRANSFERASE"/>
    <property type="match status" value="1"/>
</dbReference>
<dbReference type="Pfam" id="PF00132">
    <property type="entry name" value="Hexapep"/>
    <property type="match status" value="1"/>
</dbReference>
<dbReference type="PIRSF" id="PIRSF000441">
    <property type="entry name" value="CysE"/>
    <property type="match status" value="1"/>
</dbReference>
<dbReference type="SUPFAM" id="SSF51161">
    <property type="entry name" value="Trimeric LpxA-like enzymes"/>
    <property type="match status" value="1"/>
</dbReference>
<comment type="catalytic activity">
    <reaction>
        <text>L-serine + acetyl-CoA = O-acetyl-L-serine + CoA</text>
        <dbReference type="Rhea" id="RHEA:24560"/>
        <dbReference type="ChEBI" id="CHEBI:33384"/>
        <dbReference type="ChEBI" id="CHEBI:57287"/>
        <dbReference type="ChEBI" id="CHEBI:57288"/>
        <dbReference type="ChEBI" id="CHEBI:58340"/>
        <dbReference type="EC" id="2.3.1.30"/>
    </reaction>
</comment>
<comment type="pathway">
    <text>Amino-acid biosynthesis; L-cysteine biosynthesis; L-cysteine from L-serine: step 1/2.</text>
</comment>
<comment type="subcellular location">
    <subcellularLocation>
        <location>Cytoplasm</location>
    </subcellularLocation>
</comment>
<comment type="similarity">
    <text evidence="1">Belongs to the transferase hexapeptide repeat family.</text>
</comment>
<protein>
    <recommendedName>
        <fullName>Serine acetyltransferase</fullName>
        <shortName>SAT</shortName>
        <ecNumber>2.3.1.30</ecNumber>
    </recommendedName>
</protein>
<name>CYSE_STAAN</name>
<gene>
    <name type="primary">cysE</name>
    <name type="ordered locus">SA0487</name>
</gene>
<reference key="1">
    <citation type="journal article" date="2001" name="Lancet">
        <title>Whole genome sequencing of meticillin-resistant Staphylococcus aureus.</title>
        <authorList>
            <person name="Kuroda M."/>
            <person name="Ohta T."/>
            <person name="Uchiyama I."/>
            <person name="Baba T."/>
            <person name="Yuzawa H."/>
            <person name="Kobayashi I."/>
            <person name="Cui L."/>
            <person name="Oguchi A."/>
            <person name="Aoki K."/>
            <person name="Nagai Y."/>
            <person name="Lian J.-Q."/>
            <person name="Ito T."/>
            <person name="Kanamori M."/>
            <person name="Matsumaru H."/>
            <person name="Maruyama A."/>
            <person name="Murakami H."/>
            <person name="Hosoyama A."/>
            <person name="Mizutani-Ui Y."/>
            <person name="Takahashi N.K."/>
            <person name="Sawano T."/>
            <person name="Inoue R."/>
            <person name="Kaito C."/>
            <person name="Sekimizu K."/>
            <person name="Hirakawa H."/>
            <person name="Kuhara S."/>
            <person name="Goto S."/>
            <person name="Yabuzaki J."/>
            <person name="Kanehisa M."/>
            <person name="Yamashita A."/>
            <person name="Oshima K."/>
            <person name="Furuya K."/>
            <person name="Yoshino C."/>
            <person name="Shiba T."/>
            <person name="Hattori M."/>
            <person name="Ogasawara N."/>
            <person name="Hayashi H."/>
            <person name="Hiramatsu K."/>
        </authorList>
    </citation>
    <scope>NUCLEOTIDE SEQUENCE [LARGE SCALE GENOMIC DNA]</scope>
    <source>
        <strain>N315</strain>
    </source>
</reference>
<reference key="2">
    <citation type="submission" date="2007-10" db="UniProtKB">
        <title>Shotgun proteomic analysis of total and membrane protein extracts of S. aureus strain N315.</title>
        <authorList>
            <person name="Vaezzadeh A.R."/>
            <person name="Deshusses J."/>
            <person name="Lescuyer P."/>
            <person name="Hochstrasser D.F."/>
        </authorList>
    </citation>
    <scope>IDENTIFICATION BY MASS SPECTROMETRY [LARGE SCALE ANALYSIS]</scope>
    <source>
        <strain>N315</strain>
    </source>
</reference>
<evidence type="ECO:0000305" key="1"/>